<evidence type="ECO:0000255" key="1">
    <source>
        <dbReference type="HAMAP-Rule" id="MF_00551"/>
    </source>
</evidence>
<keyword id="KW-0067">ATP-binding</keyword>
<keyword id="KW-0963">Cytoplasm</keyword>
<keyword id="KW-0418">Kinase</keyword>
<keyword id="KW-0547">Nucleotide-binding</keyword>
<keyword id="KW-1185">Reference proteome</keyword>
<keyword id="KW-0808">Transferase</keyword>
<reference key="1">
    <citation type="journal article" date="2011" name="BMC Genomics">
        <title>Complete genome sequence of the filamentous anoxygenic phototrophic bacterium Chloroflexus aurantiacus.</title>
        <authorList>
            <person name="Tang K.H."/>
            <person name="Barry K."/>
            <person name="Chertkov O."/>
            <person name="Dalin E."/>
            <person name="Han C.S."/>
            <person name="Hauser L.J."/>
            <person name="Honchak B.M."/>
            <person name="Karbach L.E."/>
            <person name="Land M.L."/>
            <person name="Lapidus A."/>
            <person name="Larimer F.W."/>
            <person name="Mikhailova N."/>
            <person name="Pitluck S."/>
            <person name="Pierson B.K."/>
            <person name="Blankenship R.E."/>
        </authorList>
    </citation>
    <scope>NUCLEOTIDE SEQUENCE [LARGE SCALE GENOMIC DNA]</scope>
    <source>
        <strain>ATCC 29366 / DSM 635 / J-10-fl</strain>
    </source>
</reference>
<sequence length="209" mass="23636">MSTYPIIIGVAGGSASGKTSVAQAILQRVGADRIAHIDHDRYYKDLSHLPLEERAKFNFDHPDALDNDLLVAHLDALCAGQSVDLPTYDYATYVRLPQTERIEPRPVILVEGILIFYEPVLRRRMQIKLFVDTDADLRFIRRLRRDIVERGRSVESVIEQYLATVRPMHLEFVEPTKRYADVIFPGGGRNPIAIDMVVARIEAALQATP</sequence>
<comment type="catalytic activity">
    <reaction evidence="1">
        <text>uridine + ATP = UMP + ADP + H(+)</text>
        <dbReference type="Rhea" id="RHEA:16825"/>
        <dbReference type="ChEBI" id="CHEBI:15378"/>
        <dbReference type="ChEBI" id="CHEBI:16704"/>
        <dbReference type="ChEBI" id="CHEBI:30616"/>
        <dbReference type="ChEBI" id="CHEBI:57865"/>
        <dbReference type="ChEBI" id="CHEBI:456216"/>
        <dbReference type="EC" id="2.7.1.48"/>
    </reaction>
</comment>
<comment type="catalytic activity">
    <reaction evidence="1">
        <text>cytidine + ATP = CMP + ADP + H(+)</text>
        <dbReference type="Rhea" id="RHEA:24674"/>
        <dbReference type="ChEBI" id="CHEBI:15378"/>
        <dbReference type="ChEBI" id="CHEBI:17562"/>
        <dbReference type="ChEBI" id="CHEBI:30616"/>
        <dbReference type="ChEBI" id="CHEBI:60377"/>
        <dbReference type="ChEBI" id="CHEBI:456216"/>
        <dbReference type="EC" id="2.7.1.48"/>
    </reaction>
</comment>
<comment type="pathway">
    <text evidence="1">Pyrimidine metabolism; CTP biosynthesis via salvage pathway; CTP from cytidine: step 1/3.</text>
</comment>
<comment type="pathway">
    <text evidence="1">Pyrimidine metabolism; UMP biosynthesis via salvage pathway; UMP from uridine: step 1/1.</text>
</comment>
<comment type="subcellular location">
    <subcellularLocation>
        <location evidence="1">Cytoplasm</location>
    </subcellularLocation>
</comment>
<comment type="similarity">
    <text evidence="1">Belongs to the uridine kinase family.</text>
</comment>
<protein>
    <recommendedName>
        <fullName evidence="1">Uridine kinase</fullName>
        <ecNumber evidence="1">2.7.1.48</ecNumber>
    </recommendedName>
    <alternativeName>
        <fullName evidence="1">Cytidine monophosphokinase</fullName>
    </alternativeName>
    <alternativeName>
        <fullName evidence="1">Uridine monophosphokinase</fullName>
    </alternativeName>
</protein>
<proteinExistence type="inferred from homology"/>
<name>URK_CHLAA</name>
<gene>
    <name evidence="1" type="primary">udk</name>
    <name type="ordered locus">Caur_1702</name>
</gene>
<organism>
    <name type="scientific">Chloroflexus aurantiacus (strain ATCC 29366 / DSM 635 / J-10-fl)</name>
    <dbReference type="NCBI Taxonomy" id="324602"/>
    <lineage>
        <taxon>Bacteria</taxon>
        <taxon>Bacillati</taxon>
        <taxon>Chloroflexota</taxon>
        <taxon>Chloroflexia</taxon>
        <taxon>Chloroflexales</taxon>
        <taxon>Chloroflexineae</taxon>
        <taxon>Chloroflexaceae</taxon>
        <taxon>Chloroflexus</taxon>
    </lineage>
</organism>
<feature type="chain" id="PRO_1000081967" description="Uridine kinase">
    <location>
        <begin position="1"/>
        <end position="209"/>
    </location>
</feature>
<feature type="binding site" evidence="1">
    <location>
        <begin position="12"/>
        <end position="19"/>
    </location>
    <ligand>
        <name>ATP</name>
        <dbReference type="ChEBI" id="CHEBI:30616"/>
    </ligand>
</feature>
<dbReference type="EC" id="2.7.1.48" evidence="1"/>
<dbReference type="EMBL" id="CP000909">
    <property type="protein sequence ID" value="ABY34919.1"/>
    <property type="molecule type" value="Genomic_DNA"/>
</dbReference>
<dbReference type="RefSeq" id="WP_012257573.1">
    <property type="nucleotide sequence ID" value="NC_010175.1"/>
</dbReference>
<dbReference type="RefSeq" id="YP_001635308.1">
    <property type="nucleotide sequence ID" value="NC_010175.1"/>
</dbReference>
<dbReference type="SMR" id="A9WCC8"/>
<dbReference type="FunCoup" id="A9WCC8">
    <property type="interactions" value="261"/>
</dbReference>
<dbReference type="STRING" id="324602.Caur_1702"/>
<dbReference type="EnsemblBacteria" id="ABY34919">
    <property type="protein sequence ID" value="ABY34919"/>
    <property type="gene ID" value="Caur_1702"/>
</dbReference>
<dbReference type="KEGG" id="cau:Caur_1702"/>
<dbReference type="PATRIC" id="fig|324602.8.peg.1942"/>
<dbReference type="eggNOG" id="COG0572">
    <property type="taxonomic scope" value="Bacteria"/>
</dbReference>
<dbReference type="HOGENOM" id="CLU_021278_1_2_0"/>
<dbReference type="InParanoid" id="A9WCC8"/>
<dbReference type="UniPathway" id="UPA00574">
    <property type="reaction ID" value="UER00637"/>
</dbReference>
<dbReference type="UniPathway" id="UPA00579">
    <property type="reaction ID" value="UER00640"/>
</dbReference>
<dbReference type="Proteomes" id="UP000002008">
    <property type="component" value="Chromosome"/>
</dbReference>
<dbReference type="GO" id="GO:0005737">
    <property type="term" value="C:cytoplasm"/>
    <property type="evidence" value="ECO:0000318"/>
    <property type="project" value="GO_Central"/>
</dbReference>
<dbReference type="GO" id="GO:0005524">
    <property type="term" value="F:ATP binding"/>
    <property type="evidence" value="ECO:0007669"/>
    <property type="project" value="UniProtKB-UniRule"/>
</dbReference>
<dbReference type="GO" id="GO:0043771">
    <property type="term" value="F:cytidine kinase activity"/>
    <property type="evidence" value="ECO:0007669"/>
    <property type="project" value="RHEA"/>
</dbReference>
<dbReference type="GO" id="GO:0004849">
    <property type="term" value="F:uridine kinase activity"/>
    <property type="evidence" value="ECO:0007669"/>
    <property type="project" value="UniProtKB-UniRule"/>
</dbReference>
<dbReference type="GO" id="GO:0044211">
    <property type="term" value="P:CTP salvage"/>
    <property type="evidence" value="ECO:0007669"/>
    <property type="project" value="UniProtKB-UniRule"/>
</dbReference>
<dbReference type="GO" id="GO:0044206">
    <property type="term" value="P:UMP salvage"/>
    <property type="evidence" value="ECO:0007669"/>
    <property type="project" value="UniProtKB-UniRule"/>
</dbReference>
<dbReference type="CDD" id="cd02023">
    <property type="entry name" value="UMPK"/>
    <property type="match status" value="1"/>
</dbReference>
<dbReference type="Gene3D" id="3.40.50.300">
    <property type="entry name" value="P-loop containing nucleotide triphosphate hydrolases"/>
    <property type="match status" value="1"/>
</dbReference>
<dbReference type="HAMAP" id="MF_00551">
    <property type="entry name" value="Uridine_kinase"/>
    <property type="match status" value="1"/>
</dbReference>
<dbReference type="InterPro" id="IPR027417">
    <property type="entry name" value="P-loop_NTPase"/>
</dbReference>
<dbReference type="InterPro" id="IPR006083">
    <property type="entry name" value="PRK/URK"/>
</dbReference>
<dbReference type="InterPro" id="IPR026008">
    <property type="entry name" value="Uridine_kinase"/>
</dbReference>
<dbReference type="InterPro" id="IPR000764">
    <property type="entry name" value="Uridine_kinase-like"/>
</dbReference>
<dbReference type="NCBIfam" id="NF004018">
    <property type="entry name" value="PRK05480.1"/>
    <property type="match status" value="1"/>
</dbReference>
<dbReference type="NCBIfam" id="TIGR00235">
    <property type="entry name" value="udk"/>
    <property type="match status" value="1"/>
</dbReference>
<dbReference type="PANTHER" id="PTHR10285">
    <property type="entry name" value="URIDINE KINASE"/>
    <property type="match status" value="1"/>
</dbReference>
<dbReference type="Pfam" id="PF00485">
    <property type="entry name" value="PRK"/>
    <property type="match status" value="1"/>
</dbReference>
<dbReference type="PRINTS" id="PR00988">
    <property type="entry name" value="URIDINKINASE"/>
</dbReference>
<dbReference type="SUPFAM" id="SSF52540">
    <property type="entry name" value="P-loop containing nucleoside triphosphate hydrolases"/>
    <property type="match status" value="1"/>
</dbReference>
<accession>A9WCC8</accession>